<organism>
    <name type="scientific">Hamiltonella defensa subsp. Acyrthosiphon pisum (strain 5AT)</name>
    <dbReference type="NCBI Taxonomy" id="572265"/>
    <lineage>
        <taxon>Bacteria</taxon>
        <taxon>Pseudomonadati</taxon>
        <taxon>Pseudomonadota</taxon>
        <taxon>Gammaproteobacteria</taxon>
        <taxon>Enterobacterales</taxon>
        <taxon>Enterobacteriaceae</taxon>
        <taxon>aphid secondary symbionts</taxon>
        <taxon>Candidatus Hamiltonella</taxon>
    </lineage>
</organism>
<proteinExistence type="inferred from homology"/>
<sequence>MSMATIARPYAKAIFDFAVEHHSIEHWQNMLAFSAQVSAHKQVTQWLSGVMHSEKTAQIFISLCSDHLDEFSKNFIKIMAQNGRLSLLPEVLKQFMALRAMINSVIDIEVFSAIPLNEDQKKKIIFALEKRLQLKVTLNCKIDESILAGVIIRHGDRVIDGSVSNRLKRLKNFLLS</sequence>
<comment type="function">
    <text evidence="1">F(1)F(0) ATP synthase produces ATP from ADP in the presence of a proton or sodium gradient. F-type ATPases consist of two structural domains, F(1) containing the extramembraneous catalytic core and F(0) containing the membrane proton channel, linked together by a central stalk and a peripheral stalk. During catalysis, ATP synthesis in the catalytic domain of F(1) is coupled via a rotary mechanism of the central stalk subunits to proton translocation.</text>
</comment>
<comment type="function">
    <text evidence="1">This protein is part of the stalk that links CF(0) to CF(1). It either transmits conformational changes from CF(0) to CF(1) or is implicated in proton conduction.</text>
</comment>
<comment type="subunit">
    <text evidence="1">F-type ATPases have 2 components, F(1) - the catalytic core - and F(0) - the membrane proton channel. F(1) has five subunits: alpha(3), beta(3), gamma(1), delta(1), epsilon(1). F(0) has three main subunits: a(1), b(2) and c(10-14). The alpha and beta chains form an alternating ring which encloses part of the gamma chain. F(1) is attached to F(0) by a central stalk formed by the gamma and epsilon chains, while a peripheral stalk is formed by the delta and b chains.</text>
</comment>
<comment type="subcellular location">
    <subcellularLocation>
        <location evidence="1">Cell membrane</location>
        <topology evidence="1">Peripheral membrane protein</topology>
    </subcellularLocation>
</comment>
<comment type="similarity">
    <text evidence="1">Belongs to the ATPase delta chain family.</text>
</comment>
<evidence type="ECO:0000255" key="1">
    <source>
        <dbReference type="HAMAP-Rule" id="MF_01416"/>
    </source>
</evidence>
<gene>
    <name evidence="1" type="primary">atpH</name>
    <name type="ordered locus">HDEF_2338</name>
</gene>
<protein>
    <recommendedName>
        <fullName evidence="1">ATP synthase subunit delta</fullName>
    </recommendedName>
    <alternativeName>
        <fullName evidence="1">ATP synthase F(1) sector subunit delta</fullName>
    </alternativeName>
    <alternativeName>
        <fullName evidence="1">F-type ATPase subunit delta</fullName>
        <shortName evidence="1">F-ATPase subunit delta</shortName>
    </alternativeName>
</protein>
<keyword id="KW-0066">ATP synthesis</keyword>
<keyword id="KW-1003">Cell membrane</keyword>
<keyword id="KW-0139">CF(1)</keyword>
<keyword id="KW-0375">Hydrogen ion transport</keyword>
<keyword id="KW-0406">Ion transport</keyword>
<keyword id="KW-0472">Membrane</keyword>
<keyword id="KW-0813">Transport</keyword>
<reference key="1">
    <citation type="journal article" date="2009" name="Proc. Natl. Acad. Sci. U.S.A.">
        <title>Hamiltonella defensa, genome evolution of protective bacterial endosymbiont from pathogenic ancestors.</title>
        <authorList>
            <person name="Degnan P.H."/>
            <person name="Yu Y."/>
            <person name="Sisneros N."/>
            <person name="Wing R.A."/>
            <person name="Moran N.A."/>
        </authorList>
    </citation>
    <scope>NUCLEOTIDE SEQUENCE [LARGE SCALE GENOMIC DNA]</scope>
    <source>
        <strain>5AT</strain>
    </source>
</reference>
<dbReference type="EMBL" id="CP001277">
    <property type="protein sequence ID" value="ACQ68875.1"/>
    <property type="molecule type" value="Genomic_DNA"/>
</dbReference>
<dbReference type="RefSeq" id="WP_015874594.1">
    <property type="nucleotide sequence ID" value="NC_012751.1"/>
</dbReference>
<dbReference type="SMR" id="C4K906"/>
<dbReference type="STRING" id="572265.HDEF_2338"/>
<dbReference type="GeneID" id="66261827"/>
<dbReference type="KEGG" id="hde:HDEF_2338"/>
<dbReference type="eggNOG" id="COG0712">
    <property type="taxonomic scope" value="Bacteria"/>
</dbReference>
<dbReference type="HOGENOM" id="CLU_085114_3_0_6"/>
<dbReference type="Proteomes" id="UP000002334">
    <property type="component" value="Chromosome"/>
</dbReference>
<dbReference type="GO" id="GO:0005886">
    <property type="term" value="C:plasma membrane"/>
    <property type="evidence" value="ECO:0007669"/>
    <property type="project" value="UniProtKB-SubCell"/>
</dbReference>
<dbReference type="GO" id="GO:0045259">
    <property type="term" value="C:proton-transporting ATP synthase complex"/>
    <property type="evidence" value="ECO:0007669"/>
    <property type="project" value="UniProtKB-KW"/>
</dbReference>
<dbReference type="GO" id="GO:0046933">
    <property type="term" value="F:proton-transporting ATP synthase activity, rotational mechanism"/>
    <property type="evidence" value="ECO:0007669"/>
    <property type="project" value="UniProtKB-UniRule"/>
</dbReference>
<dbReference type="Gene3D" id="1.10.520.20">
    <property type="entry name" value="N-terminal domain of the delta subunit of the F1F0-ATP synthase"/>
    <property type="match status" value="1"/>
</dbReference>
<dbReference type="HAMAP" id="MF_01416">
    <property type="entry name" value="ATP_synth_delta_bact"/>
    <property type="match status" value="1"/>
</dbReference>
<dbReference type="InterPro" id="IPR026015">
    <property type="entry name" value="ATP_synth_OSCP/delta_N_sf"/>
</dbReference>
<dbReference type="InterPro" id="IPR020781">
    <property type="entry name" value="ATPase_OSCP/d_CS"/>
</dbReference>
<dbReference type="InterPro" id="IPR000711">
    <property type="entry name" value="ATPase_OSCP/dsu"/>
</dbReference>
<dbReference type="NCBIfam" id="TIGR01145">
    <property type="entry name" value="ATP_synt_delta"/>
    <property type="match status" value="1"/>
</dbReference>
<dbReference type="NCBIfam" id="NF004402">
    <property type="entry name" value="PRK05758.2-2"/>
    <property type="match status" value="1"/>
</dbReference>
<dbReference type="NCBIfam" id="NF004404">
    <property type="entry name" value="PRK05758.2-5"/>
    <property type="match status" value="1"/>
</dbReference>
<dbReference type="PANTHER" id="PTHR11910">
    <property type="entry name" value="ATP SYNTHASE DELTA CHAIN"/>
    <property type="match status" value="1"/>
</dbReference>
<dbReference type="Pfam" id="PF00213">
    <property type="entry name" value="OSCP"/>
    <property type="match status" value="1"/>
</dbReference>
<dbReference type="PRINTS" id="PR00125">
    <property type="entry name" value="ATPASEDELTA"/>
</dbReference>
<dbReference type="SUPFAM" id="SSF47928">
    <property type="entry name" value="N-terminal domain of the delta subunit of the F1F0-ATP synthase"/>
    <property type="match status" value="1"/>
</dbReference>
<dbReference type="PROSITE" id="PS00389">
    <property type="entry name" value="ATPASE_DELTA"/>
    <property type="match status" value="1"/>
</dbReference>
<feature type="chain" id="PRO_0000382102" description="ATP synthase subunit delta">
    <location>
        <begin position="1"/>
        <end position="176"/>
    </location>
</feature>
<accession>C4K906</accession>
<name>ATPD_HAMD5</name>